<reference key="1">
    <citation type="journal article" date="2003" name="Proc. Natl. Acad. Sci. U.S.A.">
        <title>Complete genome sequence and analysis of Wolinella succinogenes.</title>
        <authorList>
            <person name="Baar C."/>
            <person name="Eppinger M."/>
            <person name="Raddatz G."/>
            <person name="Simon J."/>
            <person name="Lanz C."/>
            <person name="Klimmek O."/>
            <person name="Nandakumar R."/>
            <person name="Gross R."/>
            <person name="Rosinus A."/>
            <person name="Keller H."/>
            <person name="Jagtap P."/>
            <person name="Linke B."/>
            <person name="Meyer F."/>
            <person name="Lederer H."/>
            <person name="Schuster S.C."/>
        </authorList>
    </citation>
    <scope>NUCLEOTIDE SEQUENCE [LARGE SCALE GENOMIC DNA]</scope>
    <source>
        <strain>ATCC 29543 / DSM 1740 / CCUG 13145 / JCM 31913 / LMG 7466 / NCTC 11488 / FDC 602W</strain>
    </source>
</reference>
<organism>
    <name type="scientific">Wolinella succinogenes (strain ATCC 29543 / DSM 1740 / CCUG 13145 / JCM 31913 / LMG 7466 / NCTC 11488 / FDC 602W)</name>
    <name type="common">Vibrio succinogenes</name>
    <dbReference type="NCBI Taxonomy" id="273121"/>
    <lineage>
        <taxon>Bacteria</taxon>
        <taxon>Pseudomonadati</taxon>
        <taxon>Campylobacterota</taxon>
        <taxon>Epsilonproteobacteria</taxon>
        <taxon>Campylobacterales</taxon>
        <taxon>Helicobacteraceae</taxon>
        <taxon>Wolinella</taxon>
    </lineage>
</organism>
<dbReference type="EMBL" id="BX571661">
    <property type="protein sequence ID" value="CAE10733.1"/>
    <property type="molecule type" value="Genomic_DNA"/>
</dbReference>
<dbReference type="RefSeq" id="WP_011139517.1">
    <property type="nucleotide sequence ID" value="NC_005090.1"/>
</dbReference>
<dbReference type="SMR" id="Q7M8E3"/>
<dbReference type="STRING" id="273121.WS1706"/>
<dbReference type="KEGG" id="wsu:WS1706"/>
<dbReference type="eggNOG" id="COG0093">
    <property type="taxonomic scope" value="Bacteria"/>
</dbReference>
<dbReference type="HOGENOM" id="CLU_095071_2_1_7"/>
<dbReference type="Proteomes" id="UP000000422">
    <property type="component" value="Chromosome"/>
</dbReference>
<dbReference type="GO" id="GO:0022625">
    <property type="term" value="C:cytosolic large ribosomal subunit"/>
    <property type="evidence" value="ECO:0007669"/>
    <property type="project" value="TreeGrafter"/>
</dbReference>
<dbReference type="GO" id="GO:0070180">
    <property type="term" value="F:large ribosomal subunit rRNA binding"/>
    <property type="evidence" value="ECO:0007669"/>
    <property type="project" value="TreeGrafter"/>
</dbReference>
<dbReference type="GO" id="GO:0003735">
    <property type="term" value="F:structural constituent of ribosome"/>
    <property type="evidence" value="ECO:0007669"/>
    <property type="project" value="InterPro"/>
</dbReference>
<dbReference type="GO" id="GO:0006412">
    <property type="term" value="P:translation"/>
    <property type="evidence" value="ECO:0007669"/>
    <property type="project" value="UniProtKB-UniRule"/>
</dbReference>
<dbReference type="CDD" id="cd00337">
    <property type="entry name" value="Ribosomal_uL14"/>
    <property type="match status" value="1"/>
</dbReference>
<dbReference type="FunFam" id="2.40.150.20:FF:000001">
    <property type="entry name" value="50S ribosomal protein L14"/>
    <property type="match status" value="1"/>
</dbReference>
<dbReference type="Gene3D" id="2.40.150.20">
    <property type="entry name" value="Ribosomal protein L14"/>
    <property type="match status" value="1"/>
</dbReference>
<dbReference type="HAMAP" id="MF_01367">
    <property type="entry name" value="Ribosomal_uL14"/>
    <property type="match status" value="1"/>
</dbReference>
<dbReference type="InterPro" id="IPR000218">
    <property type="entry name" value="Ribosomal_uL14"/>
</dbReference>
<dbReference type="InterPro" id="IPR005745">
    <property type="entry name" value="Ribosomal_uL14_bac-type"/>
</dbReference>
<dbReference type="InterPro" id="IPR019972">
    <property type="entry name" value="Ribosomal_uL14_CS"/>
</dbReference>
<dbReference type="InterPro" id="IPR036853">
    <property type="entry name" value="Ribosomal_uL14_sf"/>
</dbReference>
<dbReference type="NCBIfam" id="TIGR01067">
    <property type="entry name" value="rplN_bact"/>
    <property type="match status" value="1"/>
</dbReference>
<dbReference type="PANTHER" id="PTHR11761">
    <property type="entry name" value="50S/60S RIBOSOMAL PROTEIN L14/L23"/>
    <property type="match status" value="1"/>
</dbReference>
<dbReference type="PANTHER" id="PTHR11761:SF3">
    <property type="entry name" value="LARGE RIBOSOMAL SUBUNIT PROTEIN UL14M"/>
    <property type="match status" value="1"/>
</dbReference>
<dbReference type="Pfam" id="PF00238">
    <property type="entry name" value="Ribosomal_L14"/>
    <property type="match status" value="1"/>
</dbReference>
<dbReference type="SMART" id="SM01374">
    <property type="entry name" value="Ribosomal_L14"/>
    <property type="match status" value="1"/>
</dbReference>
<dbReference type="SUPFAM" id="SSF50193">
    <property type="entry name" value="Ribosomal protein L14"/>
    <property type="match status" value="1"/>
</dbReference>
<dbReference type="PROSITE" id="PS00049">
    <property type="entry name" value="RIBOSOMAL_L14"/>
    <property type="match status" value="1"/>
</dbReference>
<gene>
    <name evidence="1" type="primary">rplN</name>
    <name type="ordered locus">WS1706</name>
</gene>
<protein>
    <recommendedName>
        <fullName evidence="1">Large ribosomal subunit protein uL14</fullName>
    </recommendedName>
    <alternativeName>
        <fullName evidence="2">50S ribosomal protein L14</fullName>
    </alternativeName>
</protein>
<comment type="function">
    <text evidence="1">Binds to 23S rRNA. Forms part of two intersubunit bridges in the 70S ribosome.</text>
</comment>
<comment type="subunit">
    <text evidence="1">Part of the 50S ribosomal subunit. Forms a cluster with proteins L3 and L19. In the 70S ribosome, L14 and L19 interact and together make contacts with the 16S rRNA in bridges B5 and B8.</text>
</comment>
<comment type="similarity">
    <text evidence="1">Belongs to the universal ribosomal protein uL14 family.</text>
</comment>
<accession>Q7M8E3</accession>
<evidence type="ECO:0000255" key="1">
    <source>
        <dbReference type="HAMAP-Rule" id="MF_01367"/>
    </source>
</evidence>
<evidence type="ECO:0000305" key="2"/>
<keyword id="KW-1185">Reference proteome</keyword>
<keyword id="KW-0687">Ribonucleoprotein</keyword>
<keyword id="KW-0689">Ribosomal protein</keyword>
<keyword id="KW-0694">RNA-binding</keyword>
<keyword id="KW-0699">rRNA-binding</keyword>
<proteinExistence type="inferred from homology"/>
<name>RL14_WOLSU</name>
<sequence length="122" mass="13356">MIQSFTRLTVADNSGAKEVMCIKVLGGSKRRYATVGDVIIASVKKALPNGKIKKGQVVKAVVVRTKKEVQRDNGSLIRFDDNAAVILDNKREPVGTRIFGPVGREVRYANFMKIVSLAPEVL</sequence>
<feature type="chain" id="PRO_1000055753" description="Large ribosomal subunit protein uL14">
    <location>
        <begin position="1"/>
        <end position="122"/>
    </location>
</feature>